<comment type="function">
    <text evidence="1">RNA chaperone that binds small regulatory RNA (sRNAs) and mRNAs to facilitate mRNA translational regulation in response to envelope stress, environmental stress and changes in metabolite concentrations. Also binds with high specificity to tRNAs.</text>
</comment>
<comment type="subunit">
    <text evidence="1">Homohexamer.</text>
</comment>
<comment type="similarity">
    <text evidence="1">Belongs to the Hfq family.</text>
</comment>
<organism>
    <name type="scientific">Pelotomaculum thermopropionicum (strain DSM 13744 / JCM 10971 / SI)</name>
    <dbReference type="NCBI Taxonomy" id="370438"/>
    <lineage>
        <taxon>Bacteria</taxon>
        <taxon>Bacillati</taxon>
        <taxon>Bacillota</taxon>
        <taxon>Clostridia</taxon>
        <taxon>Eubacteriales</taxon>
        <taxon>Desulfotomaculaceae</taxon>
        <taxon>Pelotomaculum</taxon>
    </lineage>
</organism>
<name>HFQ_PELTS</name>
<gene>
    <name evidence="1" type="primary">hfq</name>
    <name type="ordered locus">PTH_1345</name>
</gene>
<dbReference type="EMBL" id="AP009389">
    <property type="protein sequence ID" value="BAF59526.1"/>
    <property type="molecule type" value="Genomic_DNA"/>
</dbReference>
<dbReference type="SMR" id="A5D2K8"/>
<dbReference type="STRING" id="370438.PTH_1345"/>
<dbReference type="KEGG" id="pth:PTH_1345"/>
<dbReference type="eggNOG" id="COG1923">
    <property type="taxonomic scope" value="Bacteria"/>
</dbReference>
<dbReference type="HOGENOM" id="CLU_113688_0_2_9"/>
<dbReference type="Proteomes" id="UP000006556">
    <property type="component" value="Chromosome"/>
</dbReference>
<dbReference type="GO" id="GO:0005829">
    <property type="term" value="C:cytosol"/>
    <property type="evidence" value="ECO:0007669"/>
    <property type="project" value="TreeGrafter"/>
</dbReference>
<dbReference type="GO" id="GO:0003723">
    <property type="term" value="F:RNA binding"/>
    <property type="evidence" value="ECO:0007669"/>
    <property type="project" value="UniProtKB-UniRule"/>
</dbReference>
<dbReference type="GO" id="GO:0006355">
    <property type="term" value="P:regulation of DNA-templated transcription"/>
    <property type="evidence" value="ECO:0007669"/>
    <property type="project" value="InterPro"/>
</dbReference>
<dbReference type="GO" id="GO:0043487">
    <property type="term" value="P:regulation of RNA stability"/>
    <property type="evidence" value="ECO:0007669"/>
    <property type="project" value="TreeGrafter"/>
</dbReference>
<dbReference type="GO" id="GO:0045974">
    <property type="term" value="P:regulation of translation, ncRNA-mediated"/>
    <property type="evidence" value="ECO:0007669"/>
    <property type="project" value="TreeGrafter"/>
</dbReference>
<dbReference type="CDD" id="cd01716">
    <property type="entry name" value="Hfq"/>
    <property type="match status" value="1"/>
</dbReference>
<dbReference type="FunFam" id="2.30.30.100:FF:000012">
    <property type="entry name" value="RNA-binding protein Hfq"/>
    <property type="match status" value="1"/>
</dbReference>
<dbReference type="Gene3D" id="2.30.30.100">
    <property type="match status" value="1"/>
</dbReference>
<dbReference type="HAMAP" id="MF_00436">
    <property type="entry name" value="Hfq"/>
    <property type="match status" value="1"/>
</dbReference>
<dbReference type="InterPro" id="IPR005001">
    <property type="entry name" value="Hfq"/>
</dbReference>
<dbReference type="InterPro" id="IPR010920">
    <property type="entry name" value="LSM_dom_sf"/>
</dbReference>
<dbReference type="InterPro" id="IPR047575">
    <property type="entry name" value="Sm"/>
</dbReference>
<dbReference type="NCBIfam" id="TIGR02383">
    <property type="entry name" value="Hfq"/>
    <property type="match status" value="1"/>
</dbReference>
<dbReference type="NCBIfam" id="NF001602">
    <property type="entry name" value="PRK00395.1"/>
    <property type="match status" value="1"/>
</dbReference>
<dbReference type="PANTHER" id="PTHR34772">
    <property type="entry name" value="RNA-BINDING PROTEIN HFQ"/>
    <property type="match status" value="1"/>
</dbReference>
<dbReference type="PANTHER" id="PTHR34772:SF1">
    <property type="entry name" value="RNA-BINDING PROTEIN HFQ"/>
    <property type="match status" value="1"/>
</dbReference>
<dbReference type="Pfam" id="PF17209">
    <property type="entry name" value="Hfq"/>
    <property type="match status" value="1"/>
</dbReference>
<dbReference type="SUPFAM" id="SSF50182">
    <property type="entry name" value="Sm-like ribonucleoproteins"/>
    <property type="match status" value="1"/>
</dbReference>
<dbReference type="PROSITE" id="PS52002">
    <property type="entry name" value="SM"/>
    <property type="match status" value="1"/>
</dbReference>
<feature type="chain" id="PRO_1000080676" description="RNA-binding protein Hfq">
    <location>
        <begin position="1"/>
        <end position="83"/>
    </location>
</feature>
<feature type="domain" description="Sm" evidence="2">
    <location>
        <begin position="10"/>
        <end position="70"/>
    </location>
</feature>
<evidence type="ECO:0000255" key="1">
    <source>
        <dbReference type="HAMAP-Rule" id="MF_00436"/>
    </source>
</evidence>
<evidence type="ECO:0000255" key="2">
    <source>
        <dbReference type="PROSITE-ProRule" id="PRU01346"/>
    </source>
</evidence>
<proteinExistence type="inferred from homology"/>
<sequence length="83" mass="9284">MTKPQINLQDAFLNQVRKENIPVTIFLVNGFQLKGMVRGFDNFTVILESEGKQLMVYKHAISTVSPLKPVSTSFSEAKAPEKS</sequence>
<reference key="1">
    <citation type="journal article" date="2008" name="Genome Res.">
        <title>The genome of Pelotomaculum thermopropionicum reveals niche-associated evolution in anaerobic microbiota.</title>
        <authorList>
            <person name="Kosaka T."/>
            <person name="Kato S."/>
            <person name="Shimoyama T."/>
            <person name="Ishii S."/>
            <person name="Abe T."/>
            <person name="Watanabe K."/>
        </authorList>
    </citation>
    <scope>NUCLEOTIDE SEQUENCE [LARGE SCALE GENOMIC DNA]</scope>
    <source>
        <strain>DSM 13744 / JCM 10971 / SI</strain>
    </source>
</reference>
<accession>A5D2K8</accession>
<protein>
    <recommendedName>
        <fullName evidence="1">RNA-binding protein Hfq</fullName>
    </recommendedName>
</protein>
<keyword id="KW-1185">Reference proteome</keyword>
<keyword id="KW-0694">RNA-binding</keyword>
<keyword id="KW-0346">Stress response</keyword>